<protein>
    <recommendedName>
        <fullName evidence="7">Complement C2</fullName>
    </recommendedName>
    <alternativeName>
        <fullName>C3/C5 convertase</fullName>
    </alternativeName>
    <component>
        <recommendedName>
            <fullName>Complement C2a</fullName>
        </recommendedName>
    </component>
    <component>
        <recommendedName>
            <fullName>Serine protease complement C2b</fullName>
            <ecNumber evidence="1">3.4.21.43</ecNumber>
        </recommendedName>
    </component>
</protein>
<reference key="1">
    <citation type="submission" date="2002-01" db="EMBL/GenBank/DDBJ databases">
        <title>Comparative analysis of human and primate complement C2 and factor B genes.</title>
        <authorList>
            <person name="Schneider P.M."/>
            <person name="Tantalaki E."/>
            <person name="Stradmann-Bellinghausen B."/>
            <person name="Rittner C."/>
        </authorList>
    </citation>
    <scope>NUCLEOTIDE SEQUENCE [GENOMIC DNA]</scope>
</reference>
<sequence>MGPLMVLFCLLFLYPGLADSAPSCPQNVNISGGTFTLSHGWAPGSLLTYSCPQGLYPSPASRLCKSSGQWQTPGATRSLSKAVCKPVRCPAPVSFENGIYTPRLGSYPVGGNVSFECEDGFILRGSPVRHCCPNGMWDGETAVCDNGAGHCPNPGISLGAVRTGFRFGHGDKVRYRCSSNLVLTGSSERECQGNGVWSGTEPICRQPYSYDFPEDVAPALGTSFSHMLGATNPTQKTKESLGRKIQIQRSGHLNLYLLLDCSQSVSENDFLIFKESASLMVDRIFSFEINVSVAIITFASEPRVLMSVLNDNSRDMTEVISSLENANYKDHENGTGTNTYAALNSVYLMMNNQMRLLGMETMAWQEIRHAIILLTDGKSNMGGSPKTAVDHIREILNINQKRNDYLDIYAIGVGKLDVDWRELNELGSKKDGERHAFILQDTKALHQVFEHMLDVSKLTDTICGVGNMSANASDQERTPWHVTIKPKSQETCRGALISDQWVLTAAHCFRDGNDHSLWRVNVGDPKSRWGKEFLIEKAVISPGFDVFAKKNQGILEFYGDDIALLKLAQKVKMSTHARPICLPCTMEANLALRRPQGSTCRDHENELLNKQSVPAHFVALNGSKLNINLKMGVEWTSCAEVVSQEKTMFPNLTDVREVVTDQFLCSGTQEDESPCKGESGGAVFLERRFRFFQVGLVSWGLYNPCLGSADKNSRKRAPRSKVPPPRDFHINLFRMQPWLRQHLGDVLNFLPL</sequence>
<accession>Q8SQ74</accession>
<organism>
    <name type="scientific">Pan troglodytes</name>
    <name type="common">Chimpanzee</name>
    <dbReference type="NCBI Taxonomy" id="9598"/>
    <lineage>
        <taxon>Eukaryota</taxon>
        <taxon>Metazoa</taxon>
        <taxon>Chordata</taxon>
        <taxon>Craniata</taxon>
        <taxon>Vertebrata</taxon>
        <taxon>Euteleostomi</taxon>
        <taxon>Mammalia</taxon>
        <taxon>Eutheria</taxon>
        <taxon>Euarchontoglires</taxon>
        <taxon>Primates</taxon>
        <taxon>Haplorrhini</taxon>
        <taxon>Catarrhini</taxon>
        <taxon>Hominidae</taxon>
        <taxon>Pan</taxon>
    </lineage>
</organism>
<name>CO2_PANTR</name>
<evidence type="ECO:0000250" key="1">
    <source>
        <dbReference type="UniProtKB" id="P06681"/>
    </source>
</evidence>
<evidence type="ECO:0000255" key="2"/>
<evidence type="ECO:0000255" key="3">
    <source>
        <dbReference type="PROSITE-ProRule" id="PRU00219"/>
    </source>
</evidence>
<evidence type="ECO:0000255" key="4">
    <source>
        <dbReference type="PROSITE-ProRule" id="PRU00274"/>
    </source>
</evidence>
<evidence type="ECO:0000255" key="5">
    <source>
        <dbReference type="PROSITE-ProRule" id="PRU00302"/>
    </source>
</evidence>
<evidence type="ECO:0000303" key="6">
    <source ref="1"/>
</evidence>
<evidence type="ECO:0000305" key="7"/>
<dbReference type="EC" id="3.4.21.43" evidence="1"/>
<dbReference type="EMBL" id="AY074703">
    <property type="protein sequence ID" value="AAL82821.1"/>
    <property type="molecule type" value="Genomic_DNA"/>
</dbReference>
<dbReference type="EMBL" id="AY074691">
    <property type="protein sequence ID" value="AAL82821.1"/>
    <property type="status" value="JOINED"/>
    <property type="molecule type" value="Genomic_DNA"/>
</dbReference>
<dbReference type="EMBL" id="AY074692">
    <property type="protein sequence ID" value="AAL82821.1"/>
    <property type="status" value="JOINED"/>
    <property type="molecule type" value="Genomic_DNA"/>
</dbReference>
<dbReference type="EMBL" id="AY074693">
    <property type="protein sequence ID" value="AAL82821.1"/>
    <property type="status" value="JOINED"/>
    <property type="molecule type" value="Genomic_DNA"/>
</dbReference>
<dbReference type="EMBL" id="AY074694">
    <property type="protein sequence ID" value="AAL82821.1"/>
    <property type="status" value="JOINED"/>
    <property type="molecule type" value="Genomic_DNA"/>
</dbReference>
<dbReference type="EMBL" id="AY074695">
    <property type="protein sequence ID" value="AAL82821.1"/>
    <property type="status" value="JOINED"/>
    <property type="molecule type" value="Genomic_DNA"/>
</dbReference>
<dbReference type="EMBL" id="AY074696">
    <property type="protein sequence ID" value="AAL82821.1"/>
    <property type="status" value="JOINED"/>
    <property type="molecule type" value="Genomic_DNA"/>
</dbReference>
<dbReference type="EMBL" id="AY074697">
    <property type="protein sequence ID" value="AAL82821.1"/>
    <property type="status" value="JOINED"/>
    <property type="molecule type" value="Genomic_DNA"/>
</dbReference>
<dbReference type="EMBL" id="AY074698">
    <property type="protein sequence ID" value="AAL82821.1"/>
    <property type="status" value="JOINED"/>
    <property type="molecule type" value="Genomic_DNA"/>
</dbReference>
<dbReference type="EMBL" id="AY074699">
    <property type="protein sequence ID" value="AAL82821.1"/>
    <property type="status" value="JOINED"/>
    <property type="molecule type" value="Genomic_DNA"/>
</dbReference>
<dbReference type="EMBL" id="AY074700">
    <property type="protein sequence ID" value="AAL82821.1"/>
    <property type="status" value="JOINED"/>
    <property type="molecule type" value="Genomic_DNA"/>
</dbReference>
<dbReference type="EMBL" id="AY074701">
    <property type="protein sequence ID" value="AAL82821.1"/>
    <property type="status" value="JOINED"/>
    <property type="molecule type" value="Genomic_DNA"/>
</dbReference>
<dbReference type="EMBL" id="AY074702">
    <property type="protein sequence ID" value="AAL82821.1"/>
    <property type="status" value="JOINED"/>
    <property type="molecule type" value="Genomic_DNA"/>
</dbReference>
<dbReference type="SMR" id="Q8SQ74"/>
<dbReference type="FunCoup" id="Q8SQ74">
    <property type="interactions" value="228"/>
</dbReference>
<dbReference type="MEROPS" id="S01.194"/>
<dbReference type="GlyCosmos" id="Q8SQ74">
    <property type="glycosylation" value="8 sites, No reported glycans"/>
</dbReference>
<dbReference type="PaxDb" id="9598-ENSPTRP00000030714"/>
<dbReference type="eggNOG" id="KOG3627">
    <property type="taxonomic scope" value="Eukaryota"/>
</dbReference>
<dbReference type="InParanoid" id="Q8SQ74"/>
<dbReference type="Proteomes" id="UP000002277">
    <property type="component" value="Unplaced"/>
</dbReference>
<dbReference type="GO" id="GO:0005576">
    <property type="term" value="C:extracellular region"/>
    <property type="evidence" value="ECO:0007669"/>
    <property type="project" value="UniProtKB-SubCell"/>
</dbReference>
<dbReference type="GO" id="GO:0046872">
    <property type="term" value="F:metal ion binding"/>
    <property type="evidence" value="ECO:0007669"/>
    <property type="project" value="UniProtKB-KW"/>
</dbReference>
<dbReference type="GO" id="GO:0004252">
    <property type="term" value="F:serine-type endopeptidase activity"/>
    <property type="evidence" value="ECO:0007669"/>
    <property type="project" value="UniProtKB-EC"/>
</dbReference>
<dbReference type="GO" id="GO:0006956">
    <property type="term" value="P:complement activation"/>
    <property type="evidence" value="ECO:0000318"/>
    <property type="project" value="GO_Central"/>
</dbReference>
<dbReference type="GO" id="GO:0006958">
    <property type="term" value="P:complement activation, classical pathway"/>
    <property type="evidence" value="ECO:0007669"/>
    <property type="project" value="UniProtKB-KW"/>
</dbReference>
<dbReference type="GO" id="GO:0045087">
    <property type="term" value="P:innate immune response"/>
    <property type="evidence" value="ECO:0007669"/>
    <property type="project" value="UniProtKB-KW"/>
</dbReference>
<dbReference type="GO" id="GO:0006508">
    <property type="term" value="P:proteolysis"/>
    <property type="evidence" value="ECO:0007669"/>
    <property type="project" value="UniProtKB-KW"/>
</dbReference>
<dbReference type="GO" id="GO:0009617">
    <property type="term" value="P:response to bacterium"/>
    <property type="evidence" value="ECO:0000318"/>
    <property type="project" value="GO_Central"/>
</dbReference>
<dbReference type="CDD" id="cd00033">
    <property type="entry name" value="CCP"/>
    <property type="match status" value="2"/>
</dbReference>
<dbReference type="CDD" id="cd00190">
    <property type="entry name" value="Tryp_SPc"/>
    <property type="match status" value="1"/>
</dbReference>
<dbReference type="CDD" id="cd01470">
    <property type="entry name" value="vWA_complement_factors"/>
    <property type="match status" value="1"/>
</dbReference>
<dbReference type="FunFam" id="3.40.50.410:FF:000065">
    <property type="entry name" value="Complement C2"/>
    <property type="match status" value="1"/>
</dbReference>
<dbReference type="FunFam" id="2.40.10.10:FF:000051">
    <property type="entry name" value="complement C2 isoform X1"/>
    <property type="match status" value="1"/>
</dbReference>
<dbReference type="FunFam" id="2.10.70.10:FF:000052">
    <property type="entry name" value="Complement factor B"/>
    <property type="match status" value="1"/>
</dbReference>
<dbReference type="FunFam" id="2.10.70.10:FF:000019">
    <property type="entry name" value="Complement factor b,-like"/>
    <property type="match status" value="2"/>
</dbReference>
<dbReference type="FunFam" id="2.40.10.10:FF:000046">
    <property type="entry name" value="Complement factor b,-like"/>
    <property type="match status" value="1"/>
</dbReference>
<dbReference type="Gene3D" id="2.10.70.10">
    <property type="entry name" value="Complement Module, domain 1"/>
    <property type="match status" value="3"/>
</dbReference>
<dbReference type="Gene3D" id="2.40.10.10">
    <property type="entry name" value="Trypsin-like serine proteases"/>
    <property type="match status" value="2"/>
</dbReference>
<dbReference type="Gene3D" id="3.40.50.410">
    <property type="entry name" value="von Willebrand factor, type A domain"/>
    <property type="match status" value="1"/>
</dbReference>
<dbReference type="InterPro" id="IPR011360">
    <property type="entry name" value="Compl_C2_B"/>
</dbReference>
<dbReference type="InterPro" id="IPR009003">
    <property type="entry name" value="Peptidase_S1_PA"/>
</dbReference>
<dbReference type="InterPro" id="IPR043504">
    <property type="entry name" value="Peptidase_S1_PA_chymotrypsin"/>
</dbReference>
<dbReference type="InterPro" id="IPR001314">
    <property type="entry name" value="Peptidase_S1A"/>
</dbReference>
<dbReference type="InterPro" id="IPR035976">
    <property type="entry name" value="Sushi/SCR/CCP_sf"/>
</dbReference>
<dbReference type="InterPro" id="IPR000436">
    <property type="entry name" value="Sushi_SCR_CCP_dom"/>
</dbReference>
<dbReference type="InterPro" id="IPR001254">
    <property type="entry name" value="Trypsin_dom"/>
</dbReference>
<dbReference type="InterPro" id="IPR018114">
    <property type="entry name" value="TRYPSIN_HIS"/>
</dbReference>
<dbReference type="InterPro" id="IPR033116">
    <property type="entry name" value="TRYPSIN_SER"/>
</dbReference>
<dbReference type="InterPro" id="IPR002035">
    <property type="entry name" value="VWF_A"/>
</dbReference>
<dbReference type="InterPro" id="IPR036465">
    <property type="entry name" value="vWFA_dom_sf"/>
</dbReference>
<dbReference type="PANTHER" id="PTHR46393:SF2">
    <property type="entry name" value="COMPLEMENT C2"/>
    <property type="match status" value="1"/>
</dbReference>
<dbReference type="PANTHER" id="PTHR46393">
    <property type="entry name" value="SUSHI DOMAIN-CONTAINING PROTEIN"/>
    <property type="match status" value="1"/>
</dbReference>
<dbReference type="Pfam" id="PF00084">
    <property type="entry name" value="Sushi"/>
    <property type="match status" value="2"/>
</dbReference>
<dbReference type="Pfam" id="PF00089">
    <property type="entry name" value="Trypsin"/>
    <property type="match status" value="1"/>
</dbReference>
<dbReference type="Pfam" id="PF00092">
    <property type="entry name" value="VWA"/>
    <property type="match status" value="1"/>
</dbReference>
<dbReference type="PIRSF" id="PIRSF001154">
    <property type="entry name" value="Compl_C2_B"/>
    <property type="match status" value="1"/>
</dbReference>
<dbReference type="PRINTS" id="PR00722">
    <property type="entry name" value="CHYMOTRYPSIN"/>
</dbReference>
<dbReference type="SMART" id="SM00032">
    <property type="entry name" value="CCP"/>
    <property type="match status" value="3"/>
</dbReference>
<dbReference type="SMART" id="SM00020">
    <property type="entry name" value="Tryp_SPc"/>
    <property type="match status" value="1"/>
</dbReference>
<dbReference type="SMART" id="SM00327">
    <property type="entry name" value="VWA"/>
    <property type="match status" value="1"/>
</dbReference>
<dbReference type="SUPFAM" id="SSF57535">
    <property type="entry name" value="Complement control module/SCR domain"/>
    <property type="match status" value="3"/>
</dbReference>
<dbReference type="SUPFAM" id="SSF50494">
    <property type="entry name" value="Trypsin-like serine proteases"/>
    <property type="match status" value="1"/>
</dbReference>
<dbReference type="SUPFAM" id="SSF53300">
    <property type="entry name" value="vWA-like"/>
    <property type="match status" value="1"/>
</dbReference>
<dbReference type="PROSITE" id="PS50923">
    <property type="entry name" value="SUSHI"/>
    <property type="match status" value="3"/>
</dbReference>
<dbReference type="PROSITE" id="PS50240">
    <property type="entry name" value="TRYPSIN_DOM"/>
    <property type="match status" value="1"/>
</dbReference>
<dbReference type="PROSITE" id="PS00134">
    <property type="entry name" value="TRYPSIN_HIS"/>
    <property type="match status" value="1"/>
</dbReference>
<dbReference type="PROSITE" id="PS00135">
    <property type="entry name" value="TRYPSIN_SER"/>
    <property type="match status" value="1"/>
</dbReference>
<dbReference type="PROSITE" id="PS50234">
    <property type="entry name" value="VWFA"/>
    <property type="match status" value="1"/>
</dbReference>
<keyword id="KW-0180">Complement pathway</keyword>
<keyword id="KW-1015">Disulfide bond</keyword>
<keyword id="KW-0325">Glycoprotein</keyword>
<keyword id="KW-0378">Hydrolase</keyword>
<keyword id="KW-0391">Immunity</keyword>
<keyword id="KW-0399">Innate immunity</keyword>
<keyword id="KW-0460">Magnesium</keyword>
<keyword id="KW-0464">Manganese</keyword>
<keyword id="KW-0479">Metal-binding</keyword>
<keyword id="KW-0645">Protease</keyword>
<keyword id="KW-1185">Reference proteome</keyword>
<keyword id="KW-0677">Repeat</keyword>
<keyword id="KW-0964">Secreted</keyword>
<keyword id="KW-0720">Serine protease</keyword>
<keyword id="KW-0732">Signal</keyword>
<keyword id="KW-0768">Sushi</keyword>
<comment type="function">
    <text evidence="1">Precursor of the catalytic component of the C3 and C5 convertase complexes, which are part of the complement pathway, a cascade of proteins that leads to phagocytosis and breakdown of pathogens and signaling that strengthens the adaptive immune system. Component C2 is part of the classical, lectin and GZMK complement systems.</text>
</comment>
<comment type="function">
    <molecule>Serine protease complement C2b</molecule>
    <text evidence="1">Catalytic component of the complement C3 and C5 convertase complexes. Following complement activation, recruited to the surface of pathogens by complement C4b opsonin to form the C3 convertase, or C3b and C4b opsonins to form the C5 convertase. As part of the C3 convertase, cleaves and activate C3 into C3a anaphylatoxin and C3b opsonin, the next components of the complement pathways. As part of the C5 convertase, cleaves and activate C5 into C5a anaphylatoxin and C5b component of the membrane attack complex.</text>
</comment>
<comment type="catalytic activity">
    <molecule>Serine protease complement C2b</molecule>
    <reaction evidence="1">
        <text>Selective cleavage of Arg-|-Ser bond in complement component C3 alpha-chain to form C3a and C3b, and Arg-|-Xaa bond in complement component C5 alpha-chain to form C5a and C5b.</text>
        <dbReference type="EC" id="3.4.21.43"/>
    </reaction>
</comment>
<comment type="cofactor">
    <cofactor evidence="1">
        <name>Mg(2+)</name>
        <dbReference type="ChEBI" id="CHEBI:18420"/>
    </cofactor>
    <cofactor evidence="1">
        <name>Mn(2+)</name>
        <dbReference type="ChEBI" id="CHEBI:29035"/>
    </cofactor>
</comment>
<comment type="subunit">
    <molecule>Serine protease complement C2b</molecule>
    <text evidence="1">Serine protease component of the C3 convertase, also named C4bC2b, composed of the serine protease complement C2b and complement C4b. Serine protease component of the C5 convertase, also named C4bC2bC3b, composed of the serine protease complement C2b, complement C3b, as well as complement C4b.</text>
</comment>
<comment type="subcellular location">
    <subcellularLocation>
        <location evidence="1">Secreted</location>
    </subcellularLocation>
    <subcellularLocation>
        <location evidence="1">Cell surface</location>
    </subcellularLocation>
    <text evidence="1">Recruited to the surface of pathogens by complement C3b and complement C4b opsonins.</text>
</comment>
<comment type="domain">
    <text evidence="1">The MIDAS-like motif in the VWFA domain binds divalent metal cations.</text>
</comment>
<comment type="PTM">
    <text evidence="1">Cleaved and activated by different proteases depending on the complement pathway to generate complement C2a and serine protease complement C2b chains. Cleaved and activated by C1S following activation by the classical complement system. Cleaved and activated by MASP2 following activation by the lectin complement system. Cleaved and activated by GZMK following activation by the GZMK complement system.</text>
</comment>
<comment type="similarity">
    <text evidence="4">Belongs to the peptidase S1 family.</text>
</comment>
<comment type="caution">
    <text evidence="7">Historically, the serine protease complement C2b, which constitutes the larger catalytic fragment, was named C2a. It was later renamed C2b, a nomenclature widely accepted now.</text>
</comment>
<feature type="signal peptide" evidence="1">
    <location>
        <begin position="1"/>
        <end position="20"/>
    </location>
</feature>
<feature type="chain" id="PRO_0000027616" description="Complement C2">
    <location>
        <begin position="21"/>
        <end position="752"/>
    </location>
</feature>
<feature type="chain" id="PRO_0000027617" description="Complement C2a" evidence="1">
    <location>
        <begin position="21"/>
        <end position="243"/>
    </location>
</feature>
<feature type="chain" id="PRO_0000027618" description="Serine protease complement C2b" evidence="1">
    <location>
        <begin position="244"/>
        <end position="752"/>
    </location>
</feature>
<feature type="domain" description="Sushi 1" evidence="5">
    <location>
        <begin position="22"/>
        <end position="86"/>
    </location>
</feature>
<feature type="domain" description="Sushi 2" evidence="5">
    <location>
        <begin position="87"/>
        <end position="146"/>
    </location>
</feature>
<feature type="domain" description="Sushi 3" evidence="5">
    <location>
        <begin position="149"/>
        <end position="206"/>
    </location>
</feature>
<feature type="domain" description="VWFA" evidence="3">
    <location>
        <begin position="254"/>
        <end position="452"/>
    </location>
</feature>
<feature type="domain" description="Peptidase S1" evidence="4">
    <location>
        <begin position="464"/>
        <end position="744"/>
    </location>
</feature>
<feature type="short sequence motif" description="MIDAS-like motif" evidence="1">
    <location>
        <begin position="260"/>
        <end position="264"/>
    </location>
</feature>
<feature type="active site" description="Charge relay system" evidence="1">
    <location>
        <position position="507"/>
    </location>
</feature>
<feature type="active site" description="Charge relay system" evidence="1">
    <location>
        <position position="561"/>
    </location>
</feature>
<feature type="active site" description="Charge relay system" evidence="1">
    <location>
        <position position="679"/>
    </location>
</feature>
<feature type="binding site" evidence="1">
    <location>
        <position position="262"/>
    </location>
    <ligand>
        <name>Mg(2+)</name>
        <dbReference type="ChEBI" id="CHEBI:18420"/>
    </ligand>
</feature>
<feature type="binding site" evidence="1">
    <location>
        <position position="264"/>
    </location>
    <ligand>
        <name>Mg(2+)</name>
        <dbReference type="ChEBI" id="CHEBI:18420"/>
    </ligand>
</feature>
<feature type="binding site" evidence="1">
    <location>
        <position position="337"/>
    </location>
    <ligand>
        <name>Mg(2+)</name>
        <dbReference type="ChEBI" id="CHEBI:18420"/>
    </ligand>
</feature>
<feature type="site" description="Cleavage; by C1S, MASP2 and GZMK" evidence="1">
    <location>
        <begin position="243"/>
        <end position="244"/>
    </location>
</feature>
<feature type="glycosylation site" description="N-linked (GlcNAc...) asparagine" evidence="2">
    <location>
        <position position="29"/>
    </location>
</feature>
<feature type="glycosylation site" description="N-linked (GlcNAc...) asparagine" evidence="2">
    <location>
        <position position="112"/>
    </location>
</feature>
<feature type="glycosylation site" description="N-linked (GlcNAc...) asparagine" evidence="2">
    <location>
        <position position="290"/>
    </location>
</feature>
<feature type="glycosylation site" description="N-linked (GlcNAc...) asparagine" evidence="2">
    <location>
        <position position="333"/>
    </location>
</feature>
<feature type="glycosylation site" description="N-linked (GlcNAc...) asparagine" evidence="2">
    <location>
        <position position="467"/>
    </location>
</feature>
<feature type="glycosylation site" description="N-linked (GlcNAc...) asparagine" evidence="2">
    <location>
        <position position="471"/>
    </location>
</feature>
<feature type="glycosylation site" description="N-linked (GlcNAc...) asparagine" evidence="2">
    <location>
        <position position="621"/>
    </location>
</feature>
<feature type="glycosylation site" description="N-linked (GlcNAc...) asparagine" evidence="2">
    <location>
        <position position="651"/>
    </location>
</feature>
<feature type="disulfide bond" evidence="1">
    <location>
        <begin position="24"/>
        <end position="64"/>
    </location>
</feature>
<feature type="disulfide bond" evidence="1">
    <location>
        <begin position="51"/>
        <end position="84"/>
    </location>
</feature>
<feature type="disulfide bond" evidence="1">
    <location>
        <begin position="89"/>
        <end position="131"/>
    </location>
</feature>
<feature type="disulfide bond" evidence="1">
    <location>
        <begin position="117"/>
        <end position="144"/>
    </location>
</feature>
<feature type="disulfide bond" evidence="1">
    <location>
        <begin position="151"/>
        <end position="191"/>
    </location>
</feature>
<feature type="disulfide bond" evidence="1">
    <location>
        <begin position="177"/>
        <end position="204"/>
    </location>
</feature>
<feature type="disulfide bond" evidence="1">
    <location>
        <begin position="463"/>
        <end position="581"/>
    </location>
</feature>
<feature type="disulfide bond" evidence="1">
    <location>
        <begin position="492"/>
        <end position="508"/>
    </location>
</feature>
<feature type="disulfide bond" evidence="1">
    <location>
        <begin position="584"/>
        <end position="600"/>
    </location>
</feature>
<feature type="disulfide bond" evidence="1">
    <location>
        <begin position="638"/>
        <end position="665"/>
    </location>
</feature>
<feature type="disulfide bond" evidence="1">
    <location>
        <begin position="675"/>
        <end position="705"/>
    </location>
</feature>
<gene>
    <name evidence="6" type="primary">C2</name>
</gene>
<proteinExistence type="inferred from homology"/>